<organism>
    <name type="scientific">Dechloromonas aromatica (strain RCB)</name>
    <dbReference type="NCBI Taxonomy" id="159087"/>
    <lineage>
        <taxon>Bacteria</taxon>
        <taxon>Pseudomonadati</taxon>
        <taxon>Pseudomonadota</taxon>
        <taxon>Betaproteobacteria</taxon>
        <taxon>Rhodocyclales</taxon>
        <taxon>Azonexaceae</taxon>
        <taxon>Dechloromonas</taxon>
    </lineage>
</organism>
<name>ILVD_DECAR</name>
<proteinExistence type="inferred from homology"/>
<sequence>MPQYRSHTSTHGRNMAGARSLWRATGMKDGDFGKPIIAVVNSFTQFVPGHVHLKDMGQLVAREIEAAGGVAKEFNTIAIDDGIAMGHSGMLYSLPSRDLIADSVEYMVNAHCADAMVCISNCDKITPGMLMAAMRLNIPVIFVSGGPMEAGKVKIQGQVIHLDLIDAMVKAADHSVSQAELDDVERSACPTCGSCSGMFTANSMNCLTEAFGLSLPGNGTVVATHADRKQLFLRAGRQIVELCKRYYEQDDASVLPRAIATKAAFENAMTLDVAMGGSTNTVLHILATAQEAGVDFTMADIDRISRSVPCLCKVAPMTDKYHIEDVHRAGGIMGILGELDRAGLINRDVPNVYAKNLGEAIDRWDVVRQHDVKVHEFFKAAPGGVPTQVAFSQDRRFNELDIDRTHGCIRNKANAYSQEGGLAVLYGNIALDGCIVKTAGVDESIWKFTGKARVFESQDAAVEAILGEKIVAGDVVVIRYEGPKGGPGMQEMLYPTSYLKSMGLGKECALLTDGRFSGGTSGLSIGHASPEAADGGAIGLVEEGDTIEIDIPNRRIHLAVTDGELAQRRAAMEAKGEAAWQPVSRERVISPALQAYALMATSADKGAVRDVKQIQRRK</sequence>
<keyword id="KW-0001">2Fe-2S</keyword>
<keyword id="KW-0028">Amino-acid biosynthesis</keyword>
<keyword id="KW-0100">Branched-chain amino acid biosynthesis</keyword>
<keyword id="KW-0408">Iron</keyword>
<keyword id="KW-0411">Iron-sulfur</keyword>
<keyword id="KW-0456">Lyase</keyword>
<keyword id="KW-0460">Magnesium</keyword>
<keyword id="KW-0479">Metal-binding</keyword>
<gene>
    <name evidence="1" type="primary">ilvD</name>
    <name type="ordered locus">Daro_0302</name>
</gene>
<reference key="1">
    <citation type="journal article" date="2009" name="BMC Genomics">
        <title>Metabolic analysis of the soil microbe Dechloromonas aromatica str. RCB: indications of a surprisingly complex life-style and cryptic anaerobic pathways for aromatic degradation.</title>
        <authorList>
            <person name="Salinero K.K."/>
            <person name="Keller K."/>
            <person name="Feil W.S."/>
            <person name="Feil H."/>
            <person name="Trong S."/>
            <person name="Di Bartolo G."/>
            <person name="Lapidus A."/>
        </authorList>
    </citation>
    <scope>NUCLEOTIDE SEQUENCE [LARGE SCALE GENOMIC DNA]</scope>
    <source>
        <strain>RCB</strain>
    </source>
</reference>
<evidence type="ECO:0000255" key="1">
    <source>
        <dbReference type="HAMAP-Rule" id="MF_00012"/>
    </source>
</evidence>
<accession>Q47JC0</accession>
<protein>
    <recommendedName>
        <fullName evidence="1">Dihydroxy-acid dehydratase</fullName>
        <shortName evidence="1">DAD</shortName>
        <ecNumber evidence="1">4.2.1.9</ecNumber>
    </recommendedName>
</protein>
<dbReference type="EC" id="4.2.1.9" evidence="1"/>
<dbReference type="EMBL" id="CP000089">
    <property type="protein sequence ID" value="AAZ45061.1"/>
    <property type="molecule type" value="Genomic_DNA"/>
</dbReference>
<dbReference type="SMR" id="Q47JC0"/>
<dbReference type="STRING" id="159087.Daro_0302"/>
<dbReference type="KEGG" id="dar:Daro_0302"/>
<dbReference type="eggNOG" id="COG0129">
    <property type="taxonomic scope" value="Bacteria"/>
</dbReference>
<dbReference type="HOGENOM" id="CLU_014271_4_2_4"/>
<dbReference type="OrthoDB" id="9807077at2"/>
<dbReference type="UniPathway" id="UPA00047">
    <property type="reaction ID" value="UER00057"/>
</dbReference>
<dbReference type="UniPathway" id="UPA00049">
    <property type="reaction ID" value="UER00061"/>
</dbReference>
<dbReference type="GO" id="GO:0005829">
    <property type="term" value="C:cytosol"/>
    <property type="evidence" value="ECO:0007669"/>
    <property type="project" value="TreeGrafter"/>
</dbReference>
<dbReference type="GO" id="GO:0051537">
    <property type="term" value="F:2 iron, 2 sulfur cluster binding"/>
    <property type="evidence" value="ECO:0007669"/>
    <property type="project" value="UniProtKB-UniRule"/>
</dbReference>
<dbReference type="GO" id="GO:0004160">
    <property type="term" value="F:dihydroxy-acid dehydratase activity"/>
    <property type="evidence" value="ECO:0007669"/>
    <property type="project" value="UniProtKB-UniRule"/>
</dbReference>
<dbReference type="GO" id="GO:0000287">
    <property type="term" value="F:magnesium ion binding"/>
    <property type="evidence" value="ECO:0007669"/>
    <property type="project" value="UniProtKB-UniRule"/>
</dbReference>
<dbReference type="GO" id="GO:0009097">
    <property type="term" value="P:isoleucine biosynthetic process"/>
    <property type="evidence" value="ECO:0007669"/>
    <property type="project" value="UniProtKB-UniRule"/>
</dbReference>
<dbReference type="GO" id="GO:0009099">
    <property type="term" value="P:L-valine biosynthetic process"/>
    <property type="evidence" value="ECO:0007669"/>
    <property type="project" value="UniProtKB-UniRule"/>
</dbReference>
<dbReference type="FunFam" id="3.50.30.80:FF:000001">
    <property type="entry name" value="Dihydroxy-acid dehydratase"/>
    <property type="match status" value="1"/>
</dbReference>
<dbReference type="Gene3D" id="3.50.30.80">
    <property type="entry name" value="IlvD/EDD C-terminal domain-like"/>
    <property type="match status" value="1"/>
</dbReference>
<dbReference type="HAMAP" id="MF_00012">
    <property type="entry name" value="IlvD"/>
    <property type="match status" value="1"/>
</dbReference>
<dbReference type="InterPro" id="IPR042096">
    <property type="entry name" value="Dihydro-acid_dehy_C"/>
</dbReference>
<dbReference type="InterPro" id="IPR004404">
    <property type="entry name" value="DihydroxyA_deHydtase"/>
</dbReference>
<dbReference type="InterPro" id="IPR020558">
    <property type="entry name" value="DiOHA_6PGluconate_deHydtase_CS"/>
</dbReference>
<dbReference type="InterPro" id="IPR056740">
    <property type="entry name" value="ILV_EDD_C"/>
</dbReference>
<dbReference type="InterPro" id="IPR000581">
    <property type="entry name" value="ILV_EDD_N"/>
</dbReference>
<dbReference type="InterPro" id="IPR037237">
    <property type="entry name" value="IlvD/EDD_N"/>
</dbReference>
<dbReference type="NCBIfam" id="TIGR00110">
    <property type="entry name" value="ilvD"/>
    <property type="match status" value="1"/>
</dbReference>
<dbReference type="NCBIfam" id="NF009103">
    <property type="entry name" value="PRK12448.1"/>
    <property type="match status" value="1"/>
</dbReference>
<dbReference type="PANTHER" id="PTHR43661">
    <property type="entry name" value="D-XYLONATE DEHYDRATASE"/>
    <property type="match status" value="1"/>
</dbReference>
<dbReference type="PANTHER" id="PTHR43661:SF3">
    <property type="entry name" value="D-XYLONATE DEHYDRATASE YAGF-RELATED"/>
    <property type="match status" value="1"/>
</dbReference>
<dbReference type="Pfam" id="PF24877">
    <property type="entry name" value="ILV_EDD_C"/>
    <property type="match status" value="1"/>
</dbReference>
<dbReference type="Pfam" id="PF00920">
    <property type="entry name" value="ILVD_EDD_N"/>
    <property type="match status" value="1"/>
</dbReference>
<dbReference type="SUPFAM" id="SSF143975">
    <property type="entry name" value="IlvD/EDD N-terminal domain-like"/>
    <property type="match status" value="1"/>
</dbReference>
<dbReference type="SUPFAM" id="SSF52016">
    <property type="entry name" value="LeuD/IlvD-like"/>
    <property type="match status" value="1"/>
</dbReference>
<dbReference type="PROSITE" id="PS00886">
    <property type="entry name" value="ILVD_EDD_1"/>
    <property type="match status" value="1"/>
</dbReference>
<dbReference type="PROSITE" id="PS00887">
    <property type="entry name" value="ILVD_EDD_2"/>
    <property type="match status" value="1"/>
</dbReference>
<comment type="function">
    <text evidence="1">Functions in the biosynthesis of branched-chain amino acids. Catalyzes the dehydration of (2R,3R)-2,3-dihydroxy-3-methylpentanoate (2,3-dihydroxy-3-methylvalerate) into 2-oxo-3-methylpentanoate (2-oxo-3-methylvalerate) and of (2R)-2,3-dihydroxy-3-methylbutanoate (2,3-dihydroxyisovalerate) into 2-oxo-3-methylbutanoate (2-oxoisovalerate), the penultimate precursor to L-isoleucine and L-valine, respectively.</text>
</comment>
<comment type="catalytic activity">
    <reaction evidence="1">
        <text>(2R)-2,3-dihydroxy-3-methylbutanoate = 3-methyl-2-oxobutanoate + H2O</text>
        <dbReference type="Rhea" id="RHEA:24809"/>
        <dbReference type="ChEBI" id="CHEBI:11851"/>
        <dbReference type="ChEBI" id="CHEBI:15377"/>
        <dbReference type="ChEBI" id="CHEBI:49072"/>
        <dbReference type="EC" id="4.2.1.9"/>
    </reaction>
    <physiologicalReaction direction="left-to-right" evidence="1">
        <dbReference type="Rhea" id="RHEA:24810"/>
    </physiologicalReaction>
</comment>
<comment type="catalytic activity">
    <reaction evidence="1">
        <text>(2R,3R)-2,3-dihydroxy-3-methylpentanoate = (S)-3-methyl-2-oxopentanoate + H2O</text>
        <dbReference type="Rhea" id="RHEA:27694"/>
        <dbReference type="ChEBI" id="CHEBI:15377"/>
        <dbReference type="ChEBI" id="CHEBI:35146"/>
        <dbReference type="ChEBI" id="CHEBI:49258"/>
        <dbReference type="EC" id="4.2.1.9"/>
    </reaction>
    <physiologicalReaction direction="left-to-right" evidence="1">
        <dbReference type="Rhea" id="RHEA:27695"/>
    </physiologicalReaction>
</comment>
<comment type="cofactor">
    <cofactor evidence="1">
        <name>[2Fe-2S] cluster</name>
        <dbReference type="ChEBI" id="CHEBI:190135"/>
    </cofactor>
    <text evidence="1">Binds 1 [2Fe-2S] cluster per subunit. This cluster acts as a Lewis acid cofactor.</text>
</comment>
<comment type="cofactor">
    <cofactor evidence="1">
        <name>Mg(2+)</name>
        <dbReference type="ChEBI" id="CHEBI:18420"/>
    </cofactor>
</comment>
<comment type="pathway">
    <text evidence="1">Amino-acid biosynthesis; L-isoleucine biosynthesis; L-isoleucine from 2-oxobutanoate: step 3/4.</text>
</comment>
<comment type="pathway">
    <text evidence="1">Amino-acid biosynthesis; L-valine biosynthesis; L-valine from pyruvate: step 3/4.</text>
</comment>
<comment type="subunit">
    <text evidence="1">Homodimer.</text>
</comment>
<comment type="similarity">
    <text evidence="1">Belongs to the IlvD/Edd family.</text>
</comment>
<feature type="chain" id="PRO_0000225386" description="Dihydroxy-acid dehydratase">
    <location>
        <begin position="1"/>
        <end position="618"/>
    </location>
</feature>
<feature type="active site" description="Proton acceptor" evidence="1">
    <location>
        <position position="517"/>
    </location>
</feature>
<feature type="binding site" evidence="1">
    <location>
        <position position="81"/>
    </location>
    <ligand>
        <name>Mg(2+)</name>
        <dbReference type="ChEBI" id="CHEBI:18420"/>
    </ligand>
</feature>
<feature type="binding site" evidence="1">
    <location>
        <position position="122"/>
    </location>
    <ligand>
        <name>[2Fe-2S] cluster</name>
        <dbReference type="ChEBI" id="CHEBI:190135"/>
    </ligand>
</feature>
<feature type="binding site" evidence="1">
    <location>
        <position position="123"/>
    </location>
    <ligand>
        <name>Mg(2+)</name>
        <dbReference type="ChEBI" id="CHEBI:18420"/>
    </ligand>
</feature>
<feature type="binding site" description="via carbamate group" evidence="1">
    <location>
        <position position="124"/>
    </location>
    <ligand>
        <name>Mg(2+)</name>
        <dbReference type="ChEBI" id="CHEBI:18420"/>
    </ligand>
</feature>
<feature type="binding site" evidence="1">
    <location>
        <position position="195"/>
    </location>
    <ligand>
        <name>[2Fe-2S] cluster</name>
        <dbReference type="ChEBI" id="CHEBI:190135"/>
    </ligand>
</feature>
<feature type="binding site" evidence="1">
    <location>
        <position position="491"/>
    </location>
    <ligand>
        <name>Mg(2+)</name>
        <dbReference type="ChEBI" id="CHEBI:18420"/>
    </ligand>
</feature>
<feature type="modified residue" description="N6-carboxylysine" evidence="1">
    <location>
        <position position="124"/>
    </location>
</feature>